<comment type="function">
    <text evidence="3">May play a role as NF-kappa-B regulator.</text>
</comment>
<comment type="subunit">
    <text>Binds polyubiquitin.</text>
</comment>
<comment type="sequence caution" evidence="4">
    <conflict type="erroneous initiation">
        <sequence resource="EMBL-CDS" id="AAC05812"/>
    </conflict>
    <text>Extended N-terminus.</text>
</comment>
<comment type="sequence caution" evidence="4">
    <conflict type="erroneous initiation">
        <sequence resource="EMBL-CDS" id="EAW55818"/>
    </conflict>
    <text>Extended N-terminus.</text>
</comment>
<comment type="sequence caution" evidence="4">
    <conflict type="erroneous initiation">
        <sequence resource="EMBL-CDS" id="EAW55819"/>
    </conflict>
    <text>Extended N-terminus.</text>
</comment>
<keyword id="KW-1267">Proteomics identification</keyword>
<keyword id="KW-1185">Reference proteome</keyword>
<accession>O14562</accession>
<accession>A8MW58</accession>
<accession>D3DWF2</accession>
<feature type="chain" id="PRO_0000283075" description="Ubiquitin domain-containing protein UBFD1">
    <location>
        <begin position="1"/>
        <end position="309"/>
    </location>
</feature>
<feature type="domain" description="Ubiquitin-like" evidence="1">
    <location>
        <begin position="84"/>
        <end position="159"/>
    </location>
</feature>
<feature type="region of interest" description="Disordered" evidence="2">
    <location>
        <begin position="1"/>
        <end position="80"/>
    </location>
</feature>
<feature type="region of interest" description="Disordered" evidence="2">
    <location>
        <begin position="171"/>
        <end position="204"/>
    </location>
</feature>
<feature type="compositionally biased region" description="Acidic residues" evidence="2">
    <location>
        <begin position="9"/>
        <end position="19"/>
    </location>
</feature>
<feature type="compositionally biased region" description="Low complexity" evidence="2">
    <location>
        <begin position="35"/>
        <end position="57"/>
    </location>
</feature>
<feature type="compositionally biased region" description="Basic and acidic residues" evidence="2">
    <location>
        <begin position="174"/>
        <end position="185"/>
    </location>
</feature>
<feature type="compositionally biased region" description="Basic and acidic residues" evidence="2">
    <location>
        <begin position="192"/>
        <end position="201"/>
    </location>
</feature>
<name>UBFD1_HUMAN</name>
<gene>
    <name type="primary">UBFD1</name>
    <name type="synonym">UBPH</name>
</gene>
<protein>
    <recommendedName>
        <fullName>Ubiquitin domain-containing protein UBFD1</fullName>
    </recommendedName>
    <alternativeName>
        <fullName>Ubiquitin-binding protein homolog</fullName>
    </alternativeName>
</protein>
<evidence type="ECO:0000255" key="1">
    <source>
        <dbReference type="PROSITE-ProRule" id="PRU00214"/>
    </source>
</evidence>
<evidence type="ECO:0000256" key="2">
    <source>
        <dbReference type="SAM" id="MobiDB-lite"/>
    </source>
</evidence>
<evidence type="ECO:0000269" key="3">
    <source>
    </source>
</evidence>
<evidence type="ECO:0000305" key="4"/>
<organism>
    <name type="scientific">Homo sapiens</name>
    <name type="common">Human</name>
    <dbReference type="NCBI Taxonomy" id="9606"/>
    <lineage>
        <taxon>Eukaryota</taxon>
        <taxon>Metazoa</taxon>
        <taxon>Chordata</taxon>
        <taxon>Craniata</taxon>
        <taxon>Vertebrata</taxon>
        <taxon>Euteleostomi</taxon>
        <taxon>Mammalia</taxon>
        <taxon>Eutheria</taxon>
        <taxon>Euarchontoglires</taxon>
        <taxon>Primates</taxon>
        <taxon>Haplorrhini</taxon>
        <taxon>Catarrhini</taxon>
        <taxon>Hominidae</taxon>
        <taxon>Homo</taxon>
    </lineage>
</organism>
<sequence>MAAAGAPDGMEEPGMDTEAETVATEAPARPVNCLEAEAAAGAAAEDSGAARGSLQPAPAQPPGDPAAQASVSNGEDAGGGAGRELVDLKIIWNKTKHDVKFPLDSTGSELKQKIHSITGLPPAMQKVMYKGLVPEDKTLREIKVTSGAKIMVVGSTINDVLAVNTPKDAAQQDAKAEENKKEPLCRQKQHRKVLDKGKPEDVMPSVKGAQERLPTVPLSGMYNKSGGKVRLTFKLEQDQLWIGTKERTEKLPMGSIKNVVSEPIEGHEDYHMMAFQLGPTEASYYWVYWVPTQYVDAIKDTVLGKWQYF</sequence>
<reference key="1">
    <citation type="journal article" date="2004" name="Nat. Genet.">
        <title>Complete sequencing and characterization of 21,243 full-length human cDNAs.</title>
        <authorList>
            <person name="Ota T."/>
            <person name="Suzuki Y."/>
            <person name="Nishikawa T."/>
            <person name="Otsuki T."/>
            <person name="Sugiyama T."/>
            <person name="Irie R."/>
            <person name="Wakamatsu A."/>
            <person name="Hayashi K."/>
            <person name="Sato H."/>
            <person name="Nagai K."/>
            <person name="Kimura K."/>
            <person name="Makita H."/>
            <person name="Sekine M."/>
            <person name="Obayashi M."/>
            <person name="Nishi T."/>
            <person name="Shibahara T."/>
            <person name="Tanaka T."/>
            <person name="Ishii S."/>
            <person name="Yamamoto J."/>
            <person name="Saito K."/>
            <person name="Kawai Y."/>
            <person name="Isono Y."/>
            <person name="Nakamura Y."/>
            <person name="Nagahari K."/>
            <person name="Murakami K."/>
            <person name="Yasuda T."/>
            <person name="Iwayanagi T."/>
            <person name="Wagatsuma M."/>
            <person name="Shiratori A."/>
            <person name="Sudo H."/>
            <person name="Hosoiri T."/>
            <person name="Kaku Y."/>
            <person name="Kodaira H."/>
            <person name="Kondo H."/>
            <person name="Sugawara M."/>
            <person name="Takahashi M."/>
            <person name="Kanda K."/>
            <person name="Yokoi T."/>
            <person name="Furuya T."/>
            <person name="Kikkawa E."/>
            <person name="Omura Y."/>
            <person name="Abe K."/>
            <person name="Kamihara K."/>
            <person name="Katsuta N."/>
            <person name="Sato K."/>
            <person name="Tanikawa M."/>
            <person name="Yamazaki M."/>
            <person name="Ninomiya K."/>
            <person name="Ishibashi T."/>
            <person name="Yamashita H."/>
            <person name="Murakawa K."/>
            <person name="Fujimori K."/>
            <person name="Tanai H."/>
            <person name="Kimata M."/>
            <person name="Watanabe M."/>
            <person name="Hiraoka S."/>
            <person name="Chiba Y."/>
            <person name="Ishida S."/>
            <person name="Ono Y."/>
            <person name="Takiguchi S."/>
            <person name="Watanabe S."/>
            <person name="Yosida M."/>
            <person name="Hotuta T."/>
            <person name="Kusano J."/>
            <person name="Kanehori K."/>
            <person name="Takahashi-Fujii A."/>
            <person name="Hara H."/>
            <person name="Tanase T.-O."/>
            <person name="Nomura Y."/>
            <person name="Togiya S."/>
            <person name="Komai F."/>
            <person name="Hara R."/>
            <person name="Takeuchi K."/>
            <person name="Arita M."/>
            <person name="Imose N."/>
            <person name="Musashino K."/>
            <person name="Yuuki H."/>
            <person name="Oshima A."/>
            <person name="Sasaki N."/>
            <person name="Aotsuka S."/>
            <person name="Yoshikawa Y."/>
            <person name="Matsunawa H."/>
            <person name="Ichihara T."/>
            <person name="Shiohata N."/>
            <person name="Sano S."/>
            <person name="Moriya S."/>
            <person name="Momiyama H."/>
            <person name="Satoh N."/>
            <person name="Takami S."/>
            <person name="Terashima Y."/>
            <person name="Suzuki O."/>
            <person name="Nakagawa S."/>
            <person name="Senoh A."/>
            <person name="Mizoguchi H."/>
            <person name="Goto Y."/>
            <person name="Shimizu F."/>
            <person name="Wakebe H."/>
            <person name="Hishigaki H."/>
            <person name="Watanabe T."/>
            <person name="Sugiyama A."/>
            <person name="Takemoto M."/>
            <person name="Kawakami B."/>
            <person name="Yamazaki M."/>
            <person name="Watanabe K."/>
            <person name="Kumagai A."/>
            <person name="Itakura S."/>
            <person name="Fukuzumi Y."/>
            <person name="Fujimori Y."/>
            <person name="Komiyama M."/>
            <person name="Tashiro H."/>
            <person name="Tanigami A."/>
            <person name="Fujiwara T."/>
            <person name="Ono T."/>
            <person name="Yamada K."/>
            <person name="Fujii Y."/>
            <person name="Ozaki K."/>
            <person name="Hirao M."/>
            <person name="Ohmori Y."/>
            <person name="Kawabata A."/>
            <person name="Hikiji T."/>
            <person name="Kobatake N."/>
            <person name="Inagaki H."/>
            <person name="Ikema Y."/>
            <person name="Okamoto S."/>
            <person name="Okitani R."/>
            <person name="Kawakami T."/>
            <person name="Noguchi S."/>
            <person name="Itoh T."/>
            <person name="Shigeta K."/>
            <person name="Senba T."/>
            <person name="Matsumura K."/>
            <person name="Nakajima Y."/>
            <person name="Mizuno T."/>
            <person name="Morinaga M."/>
            <person name="Sasaki M."/>
            <person name="Togashi T."/>
            <person name="Oyama M."/>
            <person name="Hata H."/>
            <person name="Watanabe M."/>
            <person name="Komatsu T."/>
            <person name="Mizushima-Sugano J."/>
            <person name="Satoh T."/>
            <person name="Shirai Y."/>
            <person name="Takahashi Y."/>
            <person name="Nakagawa K."/>
            <person name="Okumura K."/>
            <person name="Nagase T."/>
            <person name="Nomura N."/>
            <person name="Kikuchi H."/>
            <person name="Masuho Y."/>
            <person name="Yamashita R."/>
            <person name="Nakai K."/>
            <person name="Yada T."/>
            <person name="Nakamura Y."/>
            <person name="Ohara O."/>
            <person name="Isogai T."/>
            <person name="Sugano S."/>
        </authorList>
    </citation>
    <scope>NUCLEOTIDE SEQUENCE [LARGE SCALE MRNA]</scope>
    <source>
        <tissue>Skeletal muscle</tissue>
    </source>
</reference>
<reference key="2">
    <citation type="journal article" date="1999" name="Genomics">
        <title>Genome duplications and other features in 12 Mb of DNA sequence from human chromosome 16p and 16q.</title>
        <authorList>
            <person name="Loftus B.J."/>
            <person name="Kim U.-J."/>
            <person name="Sneddon V.P."/>
            <person name="Kalush F."/>
            <person name="Brandon R."/>
            <person name="Fuhrmann J."/>
            <person name="Mason T."/>
            <person name="Crosby M.L."/>
            <person name="Barnstead M."/>
            <person name="Cronin L."/>
            <person name="Mays A.D."/>
            <person name="Cao Y."/>
            <person name="Xu R.X."/>
            <person name="Kang H.-L."/>
            <person name="Mitchell S."/>
            <person name="Eichler E.E."/>
            <person name="Harris P.C."/>
            <person name="Venter J.C."/>
            <person name="Adams M.D."/>
        </authorList>
    </citation>
    <scope>NUCLEOTIDE SEQUENCE [LARGE SCALE GENOMIC DNA]</scope>
</reference>
<reference key="3">
    <citation type="journal article" date="2004" name="Nature">
        <title>The sequence and analysis of duplication-rich human chromosome 16.</title>
        <authorList>
            <person name="Martin J."/>
            <person name="Han C."/>
            <person name="Gordon L.A."/>
            <person name="Terry A."/>
            <person name="Prabhakar S."/>
            <person name="She X."/>
            <person name="Xie G."/>
            <person name="Hellsten U."/>
            <person name="Chan Y.M."/>
            <person name="Altherr M."/>
            <person name="Couronne O."/>
            <person name="Aerts A."/>
            <person name="Bajorek E."/>
            <person name="Black S."/>
            <person name="Blumer H."/>
            <person name="Branscomb E."/>
            <person name="Brown N.C."/>
            <person name="Bruno W.J."/>
            <person name="Buckingham J.M."/>
            <person name="Callen D.F."/>
            <person name="Campbell C.S."/>
            <person name="Campbell M.L."/>
            <person name="Campbell E.W."/>
            <person name="Caoile C."/>
            <person name="Challacombe J.F."/>
            <person name="Chasteen L.A."/>
            <person name="Chertkov O."/>
            <person name="Chi H.C."/>
            <person name="Christensen M."/>
            <person name="Clark L.M."/>
            <person name="Cohn J.D."/>
            <person name="Denys M."/>
            <person name="Detter J.C."/>
            <person name="Dickson M."/>
            <person name="Dimitrijevic-Bussod M."/>
            <person name="Escobar J."/>
            <person name="Fawcett J.J."/>
            <person name="Flowers D."/>
            <person name="Fotopulos D."/>
            <person name="Glavina T."/>
            <person name="Gomez M."/>
            <person name="Gonzales E."/>
            <person name="Goodstein D."/>
            <person name="Goodwin L.A."/>
            <person name="Grady D.L."/>
            <person name="Grigoriev I."/>
            <person name="Groza M."/>
            <person name="Hammon N."/>
            <person name="Hawkins T."/>
            <person name="Haydu L."/>
            <person name="Hildebrand C.E."/>
            <person name="Huang W."/>
            <person name="Israni S."/>
            <person name="Jett J."/>
            <person name="Jewett P.B."/>
            <person name="Kadner K."/>
            <person name="Kimball H."/>
            <person name="Kobayashi A."/>
            <person name="Krawczyk M.-C."/>
            <person name="Leyba T."/>
            <person name="Longmire J.L."/>
            <person name="Lopez F."/>
            <person name="Lou Y."/>
            <person name="Lowry S."/>
            <person name="Ludeman T."/>
            <person name="Manohar C.F."/>
            <person name="Mark G.A."/>
            <person name="McMurray K.L."/>
            <person name="Meincke L.J."/>
            <person name="Morgan J."/>
            <person name="Moyzis R.K."/>
            <person name="Mundt M.O."/>
            <person name="Munk A.C."/>
            <person name="Nandkeshwar R.D."/>
            <person name="Pitluck S."/>
            <person name="Pollard M."/>
            <person name="Predki P."/>
            <person name="Parson-Quintana B."/>
            <person name="Ramirez L."/>
            <person name="Rash S."/>
            <person name="Retterer J."/>
            <person name="Ricke D.O."/>
            <person name="Robinson D.L."/>
            <person name="Rodriguez A."/>
            <person name="Salamov A."/>
            <person name="Saunders E.H."/>
            <person name="Scott D."/>
            <person name="Shough T."/>
            <person name="Stallings R.L."/>
            <person name="Stalvey M."/>
            <person name="Sutherland R.D."/>
            <person name="Tapia R."/>
            <person name="Tesmer J.G."/>
            <person name="Thayer N."/>
            <person name="Thompson L.S."/>
            <person name="Tice H."/>
            <person name="Torney D.C."/>
            <person name="Tran-Gyamfi M."/>
            <person name="Tsai M."/>
            <person name="Ulanovsky L.E."/>
            <person name="Ustaszewska A."/>
            <person name="Vo N."/>
            <person name="White P.S."/>
            <person name="Williams A.L."/>
            <person name="Wills P.L."/>
            <person name="Wu J.-R."/>
            <person name="Wu K."/>
            <person name="Yang J."/>
            <person name="DeJong P."/>
            <person name="Bruce D."/>
            <person name="Doggett N.A."/>
            <person name="Deaven L."/>
            <person name="Schmutz J."/>
            <person name="Grimwood J."/>
            <person name="Richardson P."/>
            <person name="Rokhsar D.S."/>
            <person name="Eichler E.E."/>
            <person name="Gilna P."/>
            <person name="Lucas S.M."/>
            <person name="Myers R.M."/>
            <person name="Rubin E.M."/>
            <person name="Pennacchio L.A."/>
        </authorList>
    </citation>
    <scope>NUCLEOTIDE SEQUENCE [LARGE SCALE GENOMIC DNA]</scope>
</reference>
<reference key="4">
    <citation type="submission" date="2005-09" db="EMBL/GenBank/DDBJ databases">
        <authorList>
            <person name="Mural R.J."/>
            <person name="Istrail S."/>
            <person name="Sutton G.G."/>
            <person name="Florea L."/>
            <person name="Halpern A.L."/>
            <person name="Mobarry C.M."/>
            <person name="Lippert R."/>
            <person name="Walenz B."/>
            <person name="Shatkay H."/>
            <person name="Dew I."/>
            <person name="Miller J.R."/>
            <person name="Flanigan M.J."/>
            <person name="Edwards N.J."/>
            <person name="Bolanos R."/>
            <person name="Fasulo D."/>
            <person name="Halldorsson B.V."/>
            <person name="Hannenhalli S."/>
            <person name="Turner R."/>
            <person name="Yooseph S."/>
            <person name="Lu F."/>
            <person name="Nusskern D.R."/>
            <person name="Shue B.C."/>
            <person name="Zheng X.H."/>
            <person name="Zhong F."/>
            <person name="Delcher A.L."/>
            <person name="Huson D.H."/>
            <person name="Kravitz S.A."/>
            <person name="Mouchard L."/>
            <person name="Reinert K."/>
            <person name="Remington K.A."/>
            <person name="Clark A.G."/>
            <person name="Waterman M.S."/>
            <person name="Eichler E.E."/>
            <person name="Adams M.D."/>
            <person name="Hunkapiller M.W."/>
            <person name="Myers E.W."/>
            <person name="Venter J.C."/>
        </authorList>
    </citation>
    <scope>NUCLEOTIDE SEQUENCE [LARGE SCALE GENOMIC DNA]</scope>
</reference>
<reference key="5">
    <citation type="journal article" date="2009" name="Biochim. Biophys. Acta">
        <title>Identification of polyubiquitin binding proteins involved in NF-kappaB signaling using protein arrays.</title>
        <authorList>
            <person name="Fenner B.J."/>
            <person name="Scannell M."/>
            <person name="Prehn J.H."/>
        </authorList>
    </citation>
    <scope>FUNCTION</scope>
    <scope>INTERACTION WITH POLYUBIQUITIN</scope>
</reference>
<reference key="6">
    <citation type="journal article" date="2009" name="Sci. Signal.">
        <title>Quantitative phosphoproteomic analysis of T cell receptor signaling reveals system-wide modulation of protein-protein interactions.</title>
        <authorList>
            <person name="Mayya V."/>
            <person name="Lundgren D.H."/>
            <person name="Hwang S.-I."/>
            <person name="Rezaul K."/>
            <person name="Wu L."/>
            <person name="Eng J.K."/>
            <person name="Rodionov V."/>
            <person name="Han D.K."/>
        </authorList>
    </citation>
    <scope>IDENTIFICATION BY MASS SPECTROMETRY [LARGE SCALE ANALYSIS]</scope>
    <source>
        <tissue>Leukemic T-cell</tissue>
    </source>
</reference>
<reference key="7">
    <citation type="journal article" date="2011" name="BMC Syst. Biol.">
        <title>Initial characterization of the human central proteome.</title>
        <authorList>
            <person name="Burkard T.R."/>
            <person name="Planyavsky M."/>
            <person name="Kaupe I."/>
            <person name="Breitwieser F.P."/>
            <person name="Buerckstuemmer T."/>
            <person name="Bennett K.L."/>
            <person name="Superti-Furga G."/>
            <person name="Colinge J."/>
        </authorList>
    </citation>
    <scope>IDENTIFICATION BY MASS SPECTROMETRY [LARGE SCALE ANALYSIS]</scope>
</reference>
<proteinExistence type="evidence at protein level"/>
<dbReference type="EMBL" id="AK092696">
    <property type="protein sequence ID" value="BAG52599.1"/>
    <property type="molecule type" value="mRNA"/>
</dbReference>
<dbReference type="EMBL" id="AC002400">
    <property type="protein sequence ID" value="AAC05812.1"/>
    <property type="status" value="ALT_INIT"/>
    <property type="molecule type" value="Genomic_DNA"/>
</dbReference>
<dbReference type="EMBL" id="AC008870">
    <property type="status" value="NOT_ANNOTATED_CDS"/>
    <property type="molecule type" value="Genomic_DNA"/>
</dbReference>
<dbReference type="EMBL" id="CH471145">
    <property type="protein sequence ID" value="EAW55818.1"/>
    <property type="status" value="ALT_INIT"/>
    <property type="molecule type" value="Genomic_DNA"/>
</dbReference>
<dbReference type="EMBL" id="CH471145">
    <property type="protein sequence ID" value="EAW55819.1"/>
    <property type="status" value="ALT_INIT"/>
    <property type="molecule type" value="Genomic_DNA"/>
</dbReference>
<dbReference type="CCDS" id="CCDS10613.2"/>
<dbReference type="PIR" id="T00742">
    <property type="entry name" value="T00742"/>
</dbReference>
<dbReference type="RefSeq" id="NP_061989.2">
    <property type="nucleotide sequence ID" value="NM_019116.3"/>
</dbReference>
<dbReference type="SMR" id="O14562"/>
<dbReference type="BioGRID" id="121034">
    <property type="interactions" value="76"/>
</dbReference>
<dbReference type="FunCoup" id="O14562">
    <property type="interactions" value="2777"/>
</dbReference>
<dbReference type="IntAct" id="O14562">
    <property type="interactions" value="7"/>
</dbReference>
<dbReference type="MINT" id="O14562"/>
<dbReference type="STRING" id="9606.ENSP00000379217"/>
<dbReference type="GlyGen" id="O14562">
    <property type="glycosylation" value="2 sites, 1 O-linked glycan (1 site)"/>
</dbReference>
<dbReference type="iPTMnet" id="O14562"/>
<dbReference type="MetOSite" id="O14562"/>
<dbReference type="PhosphoSitePlus" id="O14562"/>
<dbReference type="BioMuta" id="UBFD1"/>
<dbReference type="jPOST" id="O14562"/>
<dbReference type="MassIVE" id="O14562"/>
<dbReference type="PaxDb" id="9606-ENSP00000379217"/>
<dbReference type="PeptideAtlas" id="O14562"/>
<dbReference type="ProteomicsDB" id="48089"/>
<dbReference type="Pumba" id="O14562"/>
<dbReference type="Antibodypedia" id="55161">
    <property type="antibodies" value="146 antibodies from 22 providers"/>
</dbReference>
<dbReference type="DNASU" id="56061"/>
<dbReference type="Ensembl" id="ENST00000395878.8">
    <property type="protein sequence ID" value="ENSP00000379217.3"/>
    <property type="gene ID" value="ENSG00000103353.16"/>
</dbReference>
<dbReference type="GeneID" id="56061"/>
<dbReference type="KEGG" id="hsa:56061"/>
<dbReference type="MANE-Select" id="ENST00000395878.8">
    <property type="protein sequence ID" value="ENSP00000379217.3"/>
    <property type="RefSeq nucleotide sequence ID" value="NM_019116.3"/>
    <property type="RefSeq protein sequence ID" value="NP_061989.2"/>
</dbReference>
<dbReference type="UCSC" id="uc002dlv.4">
    <property type="organism name" value="human"/>
</dbReference>
<dbReference type="AGR" id="HGNC:30565"/>
<dbReference type="CTD" id="56061"/>
<dbReference type="GeneCards" id="UBFD1"/>
<dbReference type="HGNC" id="HGNC:30565">
    <property type="gene designation" value="UBFD1"/>
</dbReference>
<dbReference type="HPA" id="ENSG00000103353">
    <property type="expression patterns" value="Tissue enhanced (skeletal)"/>
</dbReference>
<dbReference type="MIM" id="621059">
    <property type="type" value="gene"/>
</dbReference>
<dbReference type="neXtProt" id="NX_O14562"/>
<dbReference type="OpenTargets" id="ENSG00000103353"/>
<dbReference type="PharmGKB" id="PA162407893"/>
<dbReference type="VEuPathDB" id="HostDB:ENSG00000103353"/>
<dbReference type="eggNOG" id="KOG1872">
    <property type="taxonomic scope" value="Eukaryota"/>
</dbReference>
<dbReference type="GeneTree" id="ENSGT00390000012857"/>
<dbReference type="InParanoid" id="O14562"/>
<dbReference type="OMA" id="SEPIKEH"/>
<dbReference type="OrthoDB" id="267397at2759"/>
<dbReference type="PAN-GO" id="O14562">
    <property type="GO annotations" value="0 GO annotations based on evolutionary models"/>
</dbReference>
<dbReference type="PhylomeDB" id="O14562"/>
<dbReference type="TreeFam" id="TF333280"/>
<dbReference type="PathwayCommons" id="O14562"/>
<dbReference type="SignaLink" id="O14562"/>
<dbReference type="BioGRID-ORCS" id="56061">
    <property type="hits" value="28 hits in 1153 CRISPR screens"/>
</dbReference>
<dbReference type="ChiTaRS" id="UBFD1">
    <property type="organism name" value="human"/>
</dbReference>
<dbReference type="GenomeRNAi" id="56061"/>
<dbReference type="Pharos" id="O14562">
    <property type="development level" value="Tdark"/>
</dbReference>
<dbReference type="PRO" id="PR:O14562"/>
<dbReference type="Proteomes" id="UP000005640">
    <property type="component" value="Chromosome 16"/>
</dbReference>
<dbReference type="RNAct" id="O14562">
    <property type="molecule type" value="protein"/>
</dbReference>
<dbReference type="Bgee" id="ENSG00000103353">
    <property type="expression patterns" value="Expressed in secondary oocyte and 184 other cell types or tissues"/>
</dbReference>
<dbReference type="ExpressionAtlas" id="O14562">
    <property type="expression patterns" value="baseline and differential"/>
</dbReference>
<dbReference type="GO" id="GO:0045296">
    <property type="term" value="F:cadherin binding"/>
    <property type="evidence" value="ECO:0007005"/>
    <property type="project" value="BHF-UCL"/>
</dbReference>
<dbReference type="GO" id="GO:0003723">
    <property type="term" value="F:RNA binding"/>
    <property type="evidence" value="ECO:0007005"/>
    <property type="project" value="UniProtKB"/>
</dbReference>
<dbReference type="CDD" id="cd17047">
    <property type="entry name" value="Ubl_UBFD1"/>
    <property type="match status" value="1"/>
</dbReference>
<dbReference type="FunFam" id="3.10.20.90:FF:000138">
    <property type="entry name" value="ubiquitin domain-containing protein UBFD1 isoform X2"/>
    <property type="match status" value="1"/>
</dbReference>
<dbReference type="Gene3D" id="3.10.20.90">
    <property type="entry name" value="Phosphatidylinositol 3-kinase Catalytic Subunit, Chain A, domain 1"/>
    <property type="match status" value="1"/>
</dbReference>
<dbReference type="InterPro" id="IPR039120">
    <property type="entry name" value="UBFD1"/>
</dbReference>
<dbReference type="InterPro" id="IPR000626">
    <property type="entry name" value="Ubiquitin-like_dom"/>
</dbReference>
<dbReference type="InterPro" id="IPR029071">
    <property type="entry name" value="Ubiquitin-like_domsf"/>
</dbReference>
<dbReference type="InterPro" id="IPR019954">
    <property type="entry name" value="Ubiquitin_CS"/>
</dbReference>
<dbReference type="PANTHER" id="PTHR16470">
    <property type="entry name" value="UBIQUITIN DOMAIN-CONTAINING PROTEIN UBFD1"/>
    <property type="match status" value="1"/>
</dbReference>
<dbReference type="PANTHER" id="PTHR16470:SF0">
    <property type="entry name" value="UBIQUITIN DOMAIN-CONTAINING PROTEIN UBFD1"/>
    <property type="match status" value="1"/>
</dbReference>
<dbReference type="Pfam" id="PF25343">
    <property type="entry name" value="PH_UBFD1_C"/>
    <property type="match status" value="1"/>
</dbReference>
<dbReference type="Pfam" id="PF00240">
    <property type="entry name" value="ubiquitin"/>
    <property type="match status" value="1"/>
</dbReference>
<dbReference type="SMART" id="SM00213">
    <property type="entry name" value="UBQ"/>
    <property type="match status" value="1"/>
</dbReference>
<dbReference type="SUPFAM" id="SSF54236">
    <property type="entry name" value="Ubiquitin-like"/>
    <property type="match status" value="1"/>
</dbReference>
<dbReference type="PROSITE" id="PS00299">
    <property type="entry name" value="UBIQUITIN_1"/>
    <property type="match status" value="1"/>
</dbReference>
<dbReference type="PROSITE" id="PS50053">
    <property type="entry name" value="UBIQUITIN_2"/>
    <property type="match status" value="1"/>
</dbReference>